<organism>
    <name type="scientific">Influenza A virus (strain A/Chicken/Hong Kong/FY150/2001 H5N1 genotype D)</name>
    <dbReference type="NCBI Taxonomy" id="222142"/>
    <lineage>
        <taxon>Viruses</taxon>
        <taxon>Riboviria</taxon>
        <taxon>Orthornavirae</taxon>
        <taxon>Negarnaviricota</taxon>
        <taxon>Polyploviricotina</taxon>
        <taxon>Insthoviricetes</taxon>
        <taxon>Articulavirales</taxon>
        <taxon>Orthomyxoviridae</taxon>
        <taxon>Alphainfluenzavirus</taxon>
        <taxon>Alphainfluenzavirus influenzae</taxon>
        <taxon>Influenza A virus</taxon>
    </lineage>
</organism>
<keyword id="KW-0597">Phosphoprotein</keyword>
<accession>Q809J9</accession>
<gene>
    <name type="primary">PA</name>
</gene>
<protein>
    <recommendedName>
        <fullName>Polymerase acidic protein</fullName>
    </recommendedName>
    <alternativeName>
        <fullName>RNA-directed RNA polymerase subunit P2</fullName>
    </alternativeName>
</protein>
<comment type="function">
    <text evidence="1">Implicated in endonuclease cleavage of capped RNA primers. Displays an elongation factor activity in viral RNA synthesis. Dispensable for viral transcription, but not replication (By similarity).</text>
</comment>
<comment type="subunit">
    <text evidence="1">Influenza RNA polymerase is composed of three subunits: PB1, PB2 and PA.</text>
</comment>
<comment type="PTM">
    <text evidence="1">Phosphorylated on serines and threonines by host kinases, including human casein kinase II.</text>
</comment>
<comment type="similarity">
    <text evidence="2">Belongs to the influenza viruses PA family.</text>
</comment>
<dbReference type="EMBL" id="AF509198">
    <property type="protein sequence ID" value="AAO53041.1"/>
    <property type="molecule type" value="Genomic_DNA"/>
</dbReference>
<dbReference type="SMR" id="Q809J9"/>
<dbReference type="MEROPS" id="S62.001"/>
<dbReference type="GO" id="GO:0003723">
    <property type="term" value="F:RNA binding"/>
    <property type="evidence" value="ECO:0007669"/>
    <property type="project" value="InterPro"/>
</dbReference>
<dbReference type="GO" id="GO:0039694">
    <property type="term" value="P:viral RNA genome replication"/>
    <property type="evidence" value="ECO:0007669"/>
    <property type="project" value="InterPro"/>
</dbReference>
<dbReference type="InterPro" id="IPR001009">
    <property type="entry name" value="PA/PA-X"/>
</dbReference>
<dbReference type="Pfam" id="PF00603">
    <property type="entry name" value="Flu_PA"/>
    <property type="match status" value="1"/>
</dbReference>
<feature type="chain" id="PRO_0000311131" description="Polymerase acidic protein">
    <location>
        <begin position="1" status="less than"/>
        <end position="216"/>
    </location>
</feature>
<feature type="non-terminal residue">
    <location>
        <position position="1"/>
    </location>
</feature>
<name>PA_I01A2</name>
<sequence length="216" mass="24738">DDFQLIPMISKCRTKEGRRKTNLYGFIIKGRSHLRNDTDVVNFVSMEFSLTDPRLEPHKWEKYCVLEIGDMLLRTAVGQVSRPMFLYVRTNGTSKIKMKWGMEMRRCLLQSLQQIESMIEAESSVKEKDMTKEFFENKSETWPIGESPKGVEEGSIGKVCRTLLAKSVFNSLYASPQLEGFSAESRKLLLIAQALRDNLEPGPSILEGYMKQLRSA</sequence>
<reference key="1">
    <citation type="journal article" date="2002" name="Proc. Natl. Acad. Sci. U.S.A.">
        <title>Emergence of multiple genotypes of H5N1 avian influenza viruses in Hong Kong SAR.</title>
        <authorList>
            <person name="Guan Y."/>
            <person name="Peiris J.S.M."/>
            <person name="Lipatov A.S."/>
            <person name="Ellis T.M."/>
            <person name="Dyrting K.C."/>
            <person name="Krauss S."/>
            <person name="Zhang L.J."/>
            <person name="Webster R.G."/>
            <person name="Shortridge K.F."/>
        </authorList>
    </citation>
    <scope>NUCLEOTIDE SEQUENCE [GENOMIC RNA]</scope>
</reference>
<organismHost>
    <name type="scientific">Aves</name>
    <dbReference type="NCBI Taxonomy" id="8782"/>
</organismHost>
<organismHost>
    <name type="scientific">Felis catus</name>
    <name type="common">Cat</name>
    <name type="synonym">Felis silvestris catus</name>
    <dbReference type="NCBI Taxonomy" id="9685"/>
</organismHost>
<organismHost>
    <name type="scientific">Homo sapiens</name>
    <name type="common">Human</name>
    <dbReference type="NCBI Taxonomy" id="9606"/>
</organismHost>
<organismHost>
    <name type="scientific">Panthera pardus</name>
    <name type="common">Leopard</name>
    <name type="synonym">Felis pardus</name>
    <dbReference type="NCBI Taxonomy" id="9691"/>
</organismHost>
<organismHost>
    <name type="scientific">Panthera tigris</name>
    <name type="common">Tiger</name>
    <dbReference type="NCBI Taxonomy" id="9694"/>
</organismHost>
<organismHost>
    <name type="scientific">Sus scrofa</name>
    <name type="common">Pig</name>
    <dbReference type="NCBI Taxonomy" id="9823"/>
</organismHost>
<evidence type="ECO:0000250" key="1"/>
<evidence type="ECO:0000305" key="2"/>
<proteinExistence type="inferred from homology"/>